<comment type="function">
    <text evidence="1">Acts in the modification of cell walls via demethylesterification of cell wall pectin.</text>
</comment>
<comment type="catalytic activity">
    <reaction>
        <text>[(1-&gt;4)-alpha-D-galacturonosyl methyl ester](n) + n H2O = [(1-&gt;4)-alpha-D-galacturonosyl](n) + n methanol + n H(+)</text>
        <dbReference type="Rhea" id="RHEA:22380"/>
        <dbReference type="Rhea" id="RHEA-COMP:14570"/>
        <dbReference type="Rhea" id="RHEA-COMP:14573"/>
        <dbReference type="ChEBI" id="CHEBI:15377"/>
        <dbReference type="ChEBI" id="CHEBI:15378"/>
        <dbReference type="ChEBI" id="CHEBI:17790"/>
        <dbReference type="ChEBI" id="CHEBI:140522"/>
        <dbReference type="ChEBI" id="CHEBI:140523"/>
        <dbReference type="EC" id="3.1.1.11"/>
    </reaction>
</comment>
<comment type="pathway">
    <text>Glycan metabolism; pectin degradation; 2-dehydro-3-deoxy-D-gluconate from pectin: step 1/5.</text>
</comment>
<comment type="subcellular location">
    <subcellularLocation>
        <location evidence="1">Secreted</location>
        <location evidence="1">Cell wall</location>
    </subcellularLocation>
</comment>
<comment type="tissue specificity">
    <text evidence="5">Expressed in siliques.</text>
</comment>
<comment type="developmental stage">
    <text evidence="5">Expressed during late developmental phases of siliques.</text>
</comment>
<comment type="miscellaneous">
    <text>The PMEI region may act as an autoinhibitory domain and prevent untimely PME activity during transport.</text>
</comment>
<comment type="similarity">
    <text evidence="6">In the N-terminal section; belongs to the PMEI family.</text>
</comment>
<comment type="similarity">
    <text evidence="6">In the C-terminal section; belongs to the pectinesterase family.</text>
</comment>
<dbReference type="EC" id="3.1.1.11"/>
<dbReference type="EMBL" id="AL163527">
    <property type="protein sequence ID" value="CAB86929.1"/>
    <property type="molecule type" value="Genomic_DNA"/>
</dbReference>
<dbReference type="EMBL" id="CP002686">
    <property type="protein sequence ID" value="AEE79860.1"/>
    <property type="molecule type" value="Genomic_DNA"/>
</dbReference>
<dbReference type="EMBL" id="AY060590">
    <property type="protein sequence ID" value="AAL31215.1"/>
    <property type="molecule type" value="mRNA"/>
</dbReference>
<dbReference type="EMBL" id="BT001078">
    <property type="protein sequence ID" value="AAN46858.1"/>
    <property type="molecule type" value="mRNA"/>
</dbReference>
<dbReference type="PIR" id="T47783">
    <property type="entry name" value="T47783"/>
</dbReference>
<dbReference type="SMR" id="Q9LYT5"/>
<dbReference type="FunCoup" id="Q9LYT5">
    <property type="interactions" value="62"/>
</dbReference>
<dbReference type="STRING" id="3702.Q9LYT5"/>
<dbReference type="GlyCosmos" id="Q9LYT5">
    <property type="glycosylation" value="3 sites, No reported glycans"/>
</dbReference>
<dbReference type="GlyGen" id="Q9LYT5">
    <property type="glycosylation" value="3 sites"/>
</dbReference>
<dbReference type="iPTMnet" id="Q9LYT5"/>
<dbReference type="PaxDb" id="3702-AT3G59010.1"/>
<dbReference type="ProteomicsDB" id="226276"/>
<dbReference type="EnsemblPlants" id="AT3G59010.1">
    <property type="protein sequence ID" value="AT3G59010.1"/>
    <property type="gene ID" value="AT3G59010"/>
</dbReference>
<dbReference type="GeneID" id="825070"/>
<dbReference type="Gramene" id="AT3G59010.1">
    <property type="protein sequence ID" value="AT3G59010.1"/>
    <property type="gene ID" value="AT3G59010"/>
</dbReference>
<dbReference type="KEGG" id="ath:AT3G59010"/>
<dbReference type="Araport" id="AT3G59010"/>
<dbReference type="TAIR" id="AT3G59010">
    <property type="gene designation" value="PME61"/>
</dbReference>
<dbReference type="eggNOG" id="ENOG502QRAG">
    <property type="taxonomic scope" value="Eukaryota"/>
</dbReference>
<dbReference type="HOGENOM" id="CLU_012243_9_1_1"/>
<dbReference type="InParanoid" id="Q9LYT5"/>
<dbReference type="OMA" id="VAWSCAM"/>
<dbReference type="PhylomeDB" id="Q9LYT5"/>
<dbReference type="BioCyc" id="ARA:AT3G59010-MONOMER"/>
<dbReference type="UniPathway" id="UPA00545">
    <property type="reaction ID" value="UER00823"/>
</dbReference>
<dbReference type="PRO" id="PR:Q9LYT5"/>
<dbReference type="Proteomes" id="UP000006548">
    <property type="component" value="Chromosome 3"/>
</dbReference>
<dbReference type="ExpressionAtlas" id="Q9LYT5">
    <property type="expression patterns" value="baseline and differential"/>
</dbReference>
<dbReference type="GO" id="GO:0005576">
    <property type="term" value="C:extracellular region"/>
    <property type="evidence" value="ECO:0007669"/>
    <property type="project" value="UniProtKB-KW"/>
</dbReference>
<dbReference type="GO" id="GO:0004857">
    <property type="term" value="F:enzyme inhibitor activity"/>
    <property type="evidence" value="ECO:0007669"/>
    <property type="project" value="InterPro"/>
</dbReference>
<dbReference type="GO" id="GO:0030599">
    <property type="term" value="F:pectinesterase activity"/>
    <property type="evidence" value="ECO:0000315"/>
    <property type="project" value="TAIR"/>
</dbReference>
<dbReference type="GO" id="GO:0042545">
    <property type="term" value="P:cell wall modification"/>
    <property type="evidence" value="ECO:0007669"/>
    <property type="project" value="InterPro"/>
</dbReference>
<dbReference type="GO" id="GO:0045490">
    <property type="term" value="P:pectin catabolic process"/>
    <property type="evidence" value="ECO:0007669"/>
    <property type="project" value="UniProtKB-UniPathway"/>
</dbReference>
<dbReference type="CDD" id="cd15799">
    <property type="entry name" value="PMEI-like_4"/>
    <property type="match status" value="1"/>
</dbReference>
<dbReference type="FunFam" id="1.20.140.40:FF:000039">
    <property type="entry name" value="Pectinesterase"/>
    <property type="match status" value="1"/>
</dbReference>
<dbReference type="FunFam" id="2.160.20.10:FF:000001">
    <property type="entry name" value="Pectinesterase"/>
    <property type="match status" value="1"/>
</dbReference>
<dbReference type="Gene3D" id="1.20.140.40">
    <property type="entry name" value="Invertase/pectin methylesterase inhibitor family protein"/>
    <property type="match status" value="1"/>
</dbReference>
<dbReference type="Gene3D" id="2.160.20.10">
    <property type="entry name" value="Single-stranded right-handed beta-helix, Pectin lyase-like"/>
    <property type="match status" value="1"/>
</dbReference>
<dbReference type="InterPro" id="IPR035513">
    <property type="entry name" value="Invertase/methylesterase_inhib"/>
</dbReference>
<dbReference type="InterPro" id="IPR012334">
    <property type="entry name" value="Pectin_lyas_fold"/>
</dbReference>
<dbReference type="InterPro" id="IPR011050">
    <property type="entry name" value="Pectin_lyase_fold/virulence"/>
</dbReference>
<dbReference type="InterPro" id="IPR033131">
    <property type="entry name" value="Pectinesterase_Asp_AS"/>
</dbReference>
<dbReference type="InterPro" id="IPR000070">
    <property type="entry name" value="Pectinesterase_cat"/>
</dbReference>
<dbReference type="InterPro" id="IPR006501">
    <property type="entry name" value="Pectinesterase_inhib_dom"/>
</dbReference>
<dbReference type="PANTHER" id="PTHR31707">
    <property type="entry name" value="PECTINESTERASE"/>
    <property type="match status" value="1"/>
</dbReference>
<dbReference type="Pfam" id="PF01095">
    <property type="entry name" value="Pectinesterase"/>
    <property type="match status" value="1"/>
</dbReference>
<dbReference type="Pfam" id="PF04043">
    <property type="entry name" value="PMEI"/>
    <property type="match status" value="1"/>
</dbReference>
<dbReference type="SMART" id="SM00856">
    <property type="entry name" value="PMEI"/>
    <property type="match status" value="1"/>
</dbReference>
<dbReference type="SUPFAM" id="SSF51126">
    <property type="entry name" value="Pectin lyase-like"/>
    <property type="match status" value="1"/>
</dbReference>
<dbReference type="SUPFAM" id="SSF101148">
    <property type="entry name" value="Plant invertase/pectin methylesterase inhibitor"/>
    <property type="match status" value="1"/>
</dbReference>
<dbReference type="PROSITE" id="PS00503">
    <property type="entry name" value="PECTINESTERASE_2"/>
    <property type="match status" value="1"/>
</dbReference>
<sequence length="529" mass="57513">MATTSFSLPNHKFGIKLMLFLVLNLLSLQTSVFAHSSNSKFTKISRHPNSDSSSRTKPSTSSNKGFLSSVQLSLDHALFARSLAFNLTLSHRTSQTLMLDPVNDCLELLDDTLDMLYRIVVIKRKDHVNDDVHTWLSAALTNQETCKQSLSEKSSFNKEGIAIDSFARNLTGLLTNSLDMFVSDKQKSSSSSNLTGGRKLLSDHDFPTWVSSSDRKLLEASVEELRPHAVVAADGSGTHMSVAEALASLEKGSGRSVIHLTAGTYKENLNIPSKQKNVMLVGDGKGKTVIVGSRSNRGGWNTYQSATVAAMGDGFIARDITFVNSAGPNSEQAVALRVGSDRSVVYRCSIDGYQDSLYTLSKRQFYRETDITGTVDFIFGNSAVVFQSCNLVSRKGSSDQNYVTAQGRSDPNQNTGISIHNCRITGSTKTYLGRPWKQYSRTVVMQSFIDGSIHPSGWSPWSSNFALKTLYYGEFGNSGPGSSVSGRVSWAGYHPALTLTEAQGFTVSGFIDGNSWLPSTGVVFDSGLL</sequence>
<feature type="signal peptide" evidence="2">
    <location>
        <begin position="1"/>
        <end position="34"/>
    </location>
</feature>
<feature type="chain" id="PRO_0000371687" description="Probable pectinesterase/pectinesterase inhibitor 35">
    <location>
        <begin position="35"/>
        <end position="529"/>
    </location>
</feature>
<feature type="region of interest" description="Pectinesterase inhibitor 35">
    <location>
        <begin position="36"/>
        <end position="180"/>
    </location>
</feature>
<feature type="region of interest" description="Disordered" evidence="4">
    <location>
        <begin position="42"/>
        <end position="64"/>
    </location>
</feature>
<feature type="region of interest" description="Pectinesterase 35">
    <location>
        <begin position="228"/>
        <end position="514"/>
    </location>
</feature>
<feature type="compositionally biased region" description="Low complexity" evidence="4">
    <location>
        <begin position="50"/>
        <end position="64"/>
    </location>
</feature>
<feature type="active site" description="Proton donor; for pectinesterase activity" evidence="3">
    <location>
        <position position="355"/>
    </location>
</feature>
<feature type="active site" description="Nucleophile; for pectinesterase activity" evidence="3">
    <location>
        <position position="376"/>
    </location>
</feature>
<feature type="binding site" evidence="1">
    <location>
        <position position="302"/>
    </location>
    <ligand>
        <name>substrate</name>
        <note>for pectinesterase activity</note>
    </ligand>
</feature>
<feature type="binding site" evidence="1">
    <location>
        <position position="332"/>
    </location>
    <ligand>
        <name>substrate</name>
        <note>for pectinesterase activity</note>
    </ligand>
</feature>
<feature type="binding site" evidence="1">
    <location>
        <position position="434"/>
    </location>
    <ligand>
        <name>substrate</name>
        <note>for pectinesterase activity</note>
    </ligand>
</feature>
<feature type="binding site" evidence="1">
    <location>
        <position position="436"/>
    </location>
    <ligand>
        <name>substrate</name>
        <note>for pectinesterase activity</note>
    </ligand>
</feature>
<feature type="site" description="Transition state stabilizer" evidence="1">
    <location>
        <position position="354"/>
    </location>
</feature>
<feature type="glycosylation site" description="N-linked (GlcNAc...) asparagine" evidence="2">
    <location>
        <position position="86"/>
    </location>
</feature>
<feature type="glycosylation site" description="N-linked (GlcNAc...) asparagine" evidence="2">
    <location>
        <position position="169"/>
    </location>
</feature>
<feature type="glycosylation site" description="N-linked (GlcNAc...) asparagine" evidence="2">
    <location>
        <position position="193"/>
    </location>
</feature>
<gene>
    <name type="primary">PME35</name>
    <name type="synonym">ARATH35</name>
    <name type="ordered locus">At3g59010</name>
    <name type="ORF">F17J16.60</name>
</gene>
<name>PME35_ARATH</name>
<keyword id="KW-0063">Aspartyl esterase</keyword>
<keyword id="KW-0134">Cell wall</keyword>
<keyword id="KW-0961">Cell wall biogenesis/degradation</keyword>
<keyword id="KW-0325">Glycoprotein</keyword>
<keyword id="KW-0378">Hydrolase</keyword>
<keyword id="KW-1185">Reference proteome</keyword>
<keyword id="KW-0964">Secreted</keyword>
<keyword id="KW-0732">Signal</keyword>
<proteinExistence type="evidence at transcript level"/>
<accession>Q9LYT5</accession>
<protein>
    <recommendedName>
        <fullName>Probable pectinesterase/pectinesterase inhibitor 35</fullName>
    </recommendedName>
    <domain>
        <recommendedName>
            <fullName>Pectinesterase inhibitor 35</fullName>
        </recommendedName>
        <alternativeName>
            <fullName>Pectin methylesterase inhibitor 35</fullName>
        </alternativeName>
    </domain>
    <domain>
        <recommendedName>
            <fullName>Pectinesterase 35</fullName>
            <shortName>PE 35</shortName>
            <ecNumber>3.1.1.11</ecNumber>
        </recommendedName>
        <alternativeName>
            <fullName>Pectin methylesterase 35</fullName>
            <shortName>AtPME35</shortName>
        </alternativeName>
    </domain>
</protein>
<organism>
    <name type="scientific">Arabidopsis thaliana</name>
    <name type="common">Mouse-ear cress</name>
    <dbReference type="NCBI Taxonomy" id="3702"/>
    <lineage>
        <taxon>Eukaryota</taxon>
        <taxon>Viridiplantae</taxon>
        <taxon>Streptophyta</taxon>
        <taxon>Embryophyta</taxon>
        <taxon>Tracheophyta</taxon>
        <taxon>Spermatophyta</taxon>
        <taxon>Magnoliopsida</taxon>
        <taxon>eudicotyledons</taxon>
        <taxon>Gunneridae</taxon>
        <taxon>Pentapetalae</taxon>
        <taxon>rosids</taxon>
        <taxon>malvids</taxon>
        <taxon>Brassicales</taxon>
        <taxon>Brassicaceae</taxon>
        <taxon>Camelineae</taxon>
        <taxon>Arabidopsis</taxon>
    </lineage>
</organism>
<evidence type="ECO:0000250" key="1"/>
<evidence type="ECO:0000255" key="2"/>
<evidence type="ECO:0000255" key="3">
    <source>
        <dbReference type="PROSITE-ProRule" id="PRU10040"/>
    </source>
</evidence>
<evidence type="ECO:0000256" key="4">
    <source>
        <dbReference type="SAM" id="MobiDB-lite"/>
    </source>
</evidence>
<evidence type="ECO:0000269" key="5">
    <source>
    </source>
</evidence>
<evidence type="ECO:0000305" key="6"/>
<reference key="1">
    <citation type="journal article" date="2000" name="Nature">
        <title>Sequence and analysis of chromosome 3 of the plant Arabidopsis thaliana.</title>
        <authorList>
            <person name="Salanoubat M."/>
            <person name="Lemcke K."/>
            <person name="Rieger M."/>
            <person name="Ansorge W."/>
            <person name="Unseld M."/>
            <person name="Fartmann B."/>
            <person name="Valle G."/>
            <person name="Bloecker H."/>
            <person name="Perez-Alonso M."/>
            <person name="Obermaier B."/>
            <person name="Delseny M."/>
            <person name="Boutry M."/>
            <person name="Grivell L.A."/>
            <person name="Mache R."/>
            <person name="Puigdomenech P."/>
            <person name="De Simone V."/>
            <person name="Choisne N."/>
            <person name="Artiguenave F."/>
            <person name="Robert C."/>
            <person name="Brottier P."/>
            <person name="Wincker P."/>
            <person name="Cattolico L."/>
            <person name="Weissenbach J."/>
            <person name="Saurin W."/>
            <person name="Quetier F."/>
            <person name="Schaefer M."/>
            <person name="Mueller-Auer S."/>
            <person name="Gabel C."/>
            <person name="Fuchs M."/>
            <person name="Benes V."/>
            <person name="Wurmbach E."/>
            <person name="Drzonek H."/>
            <person name="Erfle H."/>
            <person name="Jordan N."/>
            <person name="Bangert S."/>
            <person name="Wiedelmann R."/>
            <person name="Kranz H."/>
            <person name="Voss H."/>
            <person name="Holland R."/>
            <person name="Brandt P."/>
            <person name="Nyakatura G."/>
            <person name="Vezzi A."/>
            <person name="D'Angelo M."/>
            <person name="Pallavicini A."/>
            <person name="Toppo S."/>
            <person name="Simionati B."/>
            <person name="Conrad A."/>
            <person name="Hornischer K."/>
            <person name="Kauer G."/>
            <person name="Loehnert T.-H."/>
            <person name="Nordsiek G."/>
            <person name="Reichelt J."/>
            <person name="Scharfe M."/>
            <person name="Schoen O."/>
            <person name="Bargues M."/>
            <person name="Terol J."/>
            <person name="Climent J."/>
            <person name="Navarro P."/>
            <person name="Collado C."/>
            <person name="Perez-Perez A."/>
            <person name="Ottenwaelder B."/>
            <person name="Duchemin D."/>
            <person name="Cooke R."/>
            <person name="Laudie M."/>
            <person name="Berger-Llauro C."/>
            <person name="Purnelle B."/>
            <person name="Masuy D."/>
            <person name="de Haan M."/>
            <person name="Maarse A.C."/>
            <person name="Alcaraz J.-P."/>
            <person name="Cottet A."/>
            <person name="Casacuberta E."/>
            <person name="Monfort A."/>
            <person name="Argiriou A."/>
            <person name="Flores M."/>
            <person name="Liguori R."/>
            <person name="Vitale D."/>
            <person name="Mannhaupt G."/>
            <person name="Haase D."/>
            <person name="Schoof H."/>
            <person name="Rudd S."/>
            <person name="Zaccaria P."/>
            <person name="Mewes H.-W."/>
            <person name="Mayer K.F.X."/>
            <person name="Kaul S."/>
            <person name="Town C.D."/>
            <person name="Koo H.L."/>
            <person name="Tallon L.J."/>
            <person name="Jenkins J."/>
            <person name="Rooney T."/>
            <person name="Rizzo M."/>
            <person name="Walts A."/>
            <person name="Utterback T."/>
            <person name="Fujii C.Y."/>
            <person name="Shea T.P."/>
            <person name="Creasy T.H."/>
            <person name="Haas B."/>
            <person name="Maiti R."/>
            <person name="Wu D."/>
            <person name="Peterson J."/>
            <person name="Van Aken S."/>
            <person name="Pai G."/>
            <person name="Militscher J."/>
            <person name="Sellers P."/>
            <person name="Gill J.E."/>
            <person name="Feldblyum T.V."/>
            <person name="Preuss D."/>
            <person name="Lin X."/>
            <person name="Nierman W.C."/>
            <person name="Salzberg S.L."/>
            <person name="White O."/>
            <person name="Venter J.C."/>
            <person name="Fraser C.M."/>
            <person name="Kaneko T."/>
            <person name="Nakamura Y."/>
            <person name="Sato S."/>
            <person name="Kato T."/>
            <person name="Asamizu E."/>
            <person name="Sasamoto S."/>
            <person name="Kimura T."/>
            <person name="Idesawa K."/>
            <person name="Kawashima K."/>
            <person name="Kishida Y."/>
            <person name="Kiyokawa C."/>
            <person name="Kohara M."/>
            <person name="Matsumoto M."/>
            <person name="Matsuno A."/>
            <person name="Muraki A."/>
            <person name="Nakayama S."/>
            <person name="Nakazaki N."/>
            <person name="Shinpo S."/>
            <person name="Takeuchi C."/>
            <person name="Wada T."/>
            <person name="Watanabe A."/>
            <person name="Yamada M."/>
            <person name="Yasuda M."/>
            <person name="Tabata S."/>
        </authorList>
    </citation>
    <scope>NUCLEOTIDE SEQUENCE [LARGE SCALE GENOMIC DNA]</scope>
    <source>
        <strain>cv. Columbia</strain>
    </source>
</reference>
<reference key="2">
    <citation type="journal article" date="2017" name="Plant J.">
        <title>Araport11: a complete reannotation of the Arabidopsis thaliana reference genome.</title>
        <authorList>
            <person name="Cheng C.Y."/>
            <person name="Krishnakumar V."/>
            <person name="Chan A.P."/>
            <person name="Thibaud-Nissen F."/>
            <person name="Schobel S."/>
            <person name="Town C.D."/>
        </authorList>
    </citation>
    <scope>GENOME REANNOTATION</scope>
    <source>
        <strain>cv. Columbia</strain>
    </source>
</reference>
<reference key="3">
    <citation type="journal article" date="2003" name="Science">
        <title>Empirical analysis of transcriptional activity in the Arabidopsis genome.</title>
        <authorList>
            <person name="Yamada K."/>
            <person name="Lim J."/>
            <person name="Dale J.M."/>
            <person name="Chen H."/>
            <person name="Shinn P."/>
            <person name="Palm C.J."/>
            <person name="Southwick A.M."/>
            <person name="Wu H.C."/>
            <person name="Kim C.J."/>
            <person name="Nguyen M."/>
            <person name="Pham P.K."/>
            <person name="Cheuk R.F."/>
            <person name="Karlin-Newmann G."/>
            <person name="Liu S.X."/>
            <person name="Lam B."/>
            <person name="Sakano H."/>
            <person name="Wu T."/>
            <person name="Yu G."/>
            <person name="Miranda M."/>
            <person name="Quach H.L."/>
            <person name="Tripp M."/>
            <person name="Chang C.H."/>
            <person name="Lee J.M."/>
            <person name="Toriumi M.J."/>
            <person name="Chan M.M."/>
            <person name="Tang C.C."/>
            <person name="Onodera C.S."/>
            <person name="Deng J.M."/>
            <person name="Akiyama K."/>
            <person name="Ansari Y."/>
            <person name="Arakawa T."/>
            <person name="Banh J."/>
            <person name="Banno F."/>
            <person name="Bowser L."/>
            <person name="Brooks S.Y."/>
            <person name="Carninci P."/>
            <person name="Chao Q."/>
            <person name="Choy N."/>
            <person name="Enju A."/>
            <person name="Goldsmith A.D."/>
            <person name="Gurjal M."/>
            <person name="Hansen N.F."/>
            <person name="Hayashizaki Y."/>
            <person name="Johnson-Hopson C."/>
            <person name="Hsuan V.W."/>
            <person name="Iida K."/>
            <person name="Karnes M."/>
            <person name="Khan S."/>
            <person name="Koesema E."/>
            <person name="Ishida J."/>
            <person name="Jiang P.X."/>
            <person name="Jones T."/>
            <person name="Kawai J."/>
            <person name="Kamiya A."/>
            <person name="Meyers C."/>
            <person name="Nakajima M."/>
            <person name="Narusaka M."/>
            <person name="Seki M."/>
            <person name="Sakurai T."/>
            <person name="Satou M."/>
            <person name="Tamse R."/>
            <person name="Vaysberg M."/>
            <person name="Wallender E.K."/>
            <person name="Wong C."/>
            <person name="Yamamura Y."/>
            <person name="Yuan S."/>
            <person name="Shinozaki K."/>
            <person name="Davis R.W."/>
            <person name="Theologis A."/>
            <person name="Ecker J.R."/>
        </authorList>
    </citation>
    <scope>NUCLEOTIDE SEQUENCE [LARGE SCALE MRNA]</scope>
    <source>
        <strain>cv. Columbia</strain>
    </source>
</reference>
<reference key="4">
    <citation type="journal article" date="2004" name="Carbohydr. Res.">
        <title>Pectin methylesterases: sequence-structural features and phylogenetic relationships.</title>
        <authorList>
            <person name="Markovic O."/>
            <person name="Janecek S."/>
        </authorList>
    </citation>
    <scope>GENE FAMILY</scope>
    <scope>NOMENCLATURE</scope>
</reference>
<reference key="5">
    <citation type="journal article" date="2006" name="Planta">
        <title>Comprehensive expression profiling of the pectin methylesterase gene family during silique development in Arabidopsis thaliana.</title>
        <authorList>
            <person name="Louvet R."/>
            <person name="Cavel E."/>
            <person name="Gutierrez L."/>
            <person name="Guenin S."/>
            <person name="Roger D."/>
            <person name="Gillet F."/>
            <person name="Guerineau F."/>
            <person name="Pelloux J."/>
        </authorList>
    </citation>
    <scope>TISSUE SPECIFICITY</scope>
    <scope>DEVELOPMENTAL STAGE</scope>
</reference>